<proteinExistence type="inferred from homology"/>
<keyword id="KW-0963">Cytoplasm</keyword>
<keyword id="KW-0227">DNA damage</keyword>
<keyword id="KW-0234">DNA repair</keyword>
<keyword id="KW-0489">Methyltransferase</keyword>
<keyword id="KW-1185">Reference proteome</keyword>
<keyword id="KW-0808">Transferase</keyword>
<dbReference type="EC" id="2.1.1.63" evidence="1"/>
<dbReference type="EMBL" id="AE000516">
    <property type="protein sequence ID" value="AAK45619.1"/>
    <property type="status" value="ALT_INIT"/>
    <property type="molecule type" value="Genomic_DNA"/>
</dbReference>
<dbReference type="PIR" id="H70768">
    <property type="entry name" value="H70768"/>
</dbReference>
<dbReference type="RefSeq" id="WP_003406857.1">
    <property type="nucleotide sequence ID" value="NZ_KK341227.1"/>
</dbReference>
<dbReference type="SMR" id="P9WJW4"/>
<dbReference type="GeneID" id="45425292"/>
<dbReference type="KEGG" id="mtc:MT1357"/>
<dbReference type="PATRIC" id="fig|83331.31.peg.1463"/>
<dbReference type="HOGENOM" id="CLU_000445_52_2_11"/>
<dbReference type="Proteomes" id="UP000001020">
    <property type="component" value="Chromosome"/>
</dbReference>
<dbReference type="GO" id="GO:0005737">
    <property type="term" value="C:cytoplasm"/>
    <property type="evidence" value="ECO:0007669"/>
    <property type="project" value="UniProtKB-SubCell"/>
</dbReference>
<dbReference type="GO" id="GO:0003908">
    <property type="term" value="F:methylated-DNA-[protein]-cysteine S-methyltransferase activity"/>
    <property type="evidence" value="ECO:0007669"/>
    <property type="project" value="UniProtKB-UniRule"/>
</dbReference>
<dbReference type="GO" id="GO:0006307">
    <property type="term" value="P:DNA alkylation repair"/>
    <property type="evidence" value="ECO:0007669"/>
    <property type="project" value="UniProtKB-UniRule"/>
</dbReference>
<dbReference type="GO" id="GO:0032259">
    <property type="term" value="P:methylation"/>
    <property type="evidence" value="ECO:0007669"/>
    <property type="project" value="UniProtKB-KW"/>
</dbReference>
<dbReference type="CDD" id="cd06445">
    <property type="entry name" value="ATase"/>
    <property type="match status" value="1"/>
</dbReference>
<dbReference type="FunFam" id="1.10.10.10:FF:000214">
    <property type="entry name" value="Methylated-DNA--protein-cysteine methyltransferase"/>
    <property type="match status" value="1"/>
</dbReference>
<dbReference type="Gene3D" id="3.30.160.70">
    <property type="entry name" value="Methylated DNA-protein cysteine methyltransferase domain"/>
    <property type="match status" value="1"/>
</dbReference>
<dbReference type="Gene3D" id="1.10.10.10">
    <property type="entry name" value="Winged helix-like DNA-binding domain superfamily/Winged helix DNA-binding domain"/>
    <property type="match status" value="1"/>
</dbReference>
<dbReference type="HAMAP" id="MF_00772">
    <property type="entry name" value="OGT"/>
    <property type="match status" value="1"/>
</dbReference>
<dbReference type="InterPro" id="IPR001497">
    <property type="entry name" value="MethylDNA_cys_MeTrfase_AS"/>
</dbReference>
<dbReference type="InterPro" id="IPR014048">
    <property type="entry name" value="MethylDNA_cys_MeTrfase_DNA-bd"/>
</dbReference>
<dbReference type="InterPro" id="IPR036217">
    <property type="entry name" value="MethylDNA_cys_MeTrfase_DNAb"/>
</dbReference>
<dbReference type="InterPro" id="IPR008332">
    <property type="entry name" value="MethylG_MeTrfase_N"/>
</dbReference>
<dbReference type="InterPro" id="IPR023546">
    <property type="entry name" value="MGMT"/>
</dbReference>
<dbReference type="InterPro" id="IPR036631">
    <property type="entry name" value="MGMT_N_sf"/>
</dbReference>
<dbReference type="InterPro" id="IPR036388">
    <property type="entry name" value="WH-like_DNA-bd_sf"/>
</dbReference>
<dbReference type="NCBIfam" id="TIGR00589">
    <property type="entry name" value="ogt"/>
    <property type="match status" value="1"/>
</dbReference>
<dbReference type="PANTHER" id="PTHR10815">
    <property type="entry name" value="METHYLATED-DNA--PROTEIN-CYSTEINE METHYLTRANSFERASE"/>
    <property type="match status" value="1"/>
</dbReference>
<dbReference type="PANTHER" id="PTHR10815:SF5">
    <property type="entry name" value="METHYLATED-DNA--PROTEIN-CYSTEINE METHYLTRANSFERASE"/>
    <property type="match status" value="1"/>
</dbReference>
<dbReference type="Pfam" id="PF01035">
    <property type="entry name" value="DNA_binding_1"/>
    <property type="match status" value="1"/>
</dbReference>
<dbReference type="Pfam" id="PF02870">
    <property type="entry name" value="Methyltransf_1N"/>
    <property type="match status" value="1"/>
</dbReference>
<dbReference type="SUPFAM" id="SSF53155">
    <property type="entry name" value="Methylated DNA-protein cysteine methyltransferase domain"/>
    <property type="match status" value="1"/>
</dbReference>
<dbReference type="SUPFAM" id="SSF46767">
    <property type="entry name" value="Methylated DNA-protein cysteine methyltransferase, C-terminal domain"/>
    <property type="match status" value="1"/>
</dbReference>
<dbReference type="PROSITE" id="PS00374">
    <property type="entry name" value="MGMT"/>
    <property type="match status" value="1"/>
</dbReference>
<name>OGT_MYCTO</name>
<gene>
    <name evidence="1" type="primary">ogt</name>
    <name type="ordered locus">MT1357</name>
</gene>
<evidence type="ECO:0000255" key="1">
    <source>
        <dbReference type="HAMAP-Rule" id="MF_00772"/>
    </source>
</evidence>
<evidence type="ECO:0000305" key="2"/>
<comment type="function">
    <text evidence="1">Involved in the cellular defense against the biological effects of O6-methylguanine (O6-MeG) and O4-methylthymine (O4-MeT) in DNA. Repairs the methylated nucleobase in DNA by stoichiometrically transferring the methyl group to a cysteine residue in the enzyme. This is a suicide reaction: the enzyme is irreversibly inactivated.</text>
</comment>
<comment type="catalytic activity">
    <reaction evidence="1">
        <text>a 6-O-methyl-2'-deoxyguanosine in DNA + L-cysteinyl-[protein] = S-methyl-L-cysteinyl-[protein] + a 2'-deoxyguanosine in DNA</text>
        <dbReference type="Rhea" id="RHEA:24000"/>
        <dbReference type="Rhea" id="RHEA-COMP:10131"/>
        <dbReference type="Rhea" id="RHEA-COMP:10132"/>
        <dbReference type="Rhea" id="RHEA-COMP:11367"/>
        <dbReference type="Rhea" id="RHEA-COMP:11368"/>
        <dbReference type="ChEBI" id="CHEBI:29950"/>
        <dbReference type="ChEBI" id="CHEBI:82612"/>
        <dbReference type="ChEBI" id="CHEBI:85445"/>
        <dbReference type="ChEBI" id="CHEBI:85448"/>
        <dbReference type="EC" id="2.1.1.63"/>
    </reaction>
</comment>
<comment type="catalytic activity">
    <reaction evidence="1">
        <text>a 4-O-methyl-thymidine in DNA + L-cysteinyl-[protein] = a thymidine in DNA + S-methyl-L-cysteinyl-[protein]</text>
        <dbReference type="Rhea" id="RHEA:53428"/>
        <dbReference type="Rhea" id="RHEA-COMP:10131"/>
        <dbReference type="Rhea" id="RHEA-COMP:10132"/>
        <dbReference type="Rhea" id="RHEA-COMP:13555"/>
        <dbReference type="Rhea" id="RHEA-COMP:13556"/>
        <dbReference type="ChEBI" id="CHEBI:29950"/>
        <dbReference type="ChEBI" id="CHEBI:82612"/>
        <dbReference type="ChEBI" id="CHEBI:137386"/>
        <dbReference type="ChEBI" id="CHEBI:137387"/>
        <dbReference type="EC" id="2.1.1.63"/>
    </reaction>
</comment>
<comment type="subcellular location">
    <subcellularLocation>
        <location evidence="1">Cytoplasm</location>
    </subcellularLocation>
</comment>
<comment type="miscellaneous">
    <text>This enzyme catalyzes only one turnover and therefore is not strictly catalytic. According to one definition, an enzyme is a biocatalyst that acts repeatedly and over many reaction cycles.</text>
</comment>
<comment type="similarity">
    <text evidence="1">Belongs to the MGMT family.</text>
</comment>
<comment type="sequence caution" evidence="2">
    <conflict type="erroneous initiation">
        <sequence resource="EMBL-CDS" id="AAK45619"/>
    </conflict>
</comment>
<sequence length="165" mass="17858">MIHYRTIDSPIGPLTLAGHGSVLTNLRMLEQTYEPSRTHWTPDPGAFSGAVDQLNAYFAGELTEFDVELDLRGTDFQQRVWKALLTIPYGETRSYGEIADQIGAPGAARAVGLANGHNPIAIIVPCHRVIGASGKLTGYGGGINRKRALLELEKSRAPADLTLFD</sequence>
<organism>
    <name type="scientific">Mycobacterium tuberculosis (strain CDC 1551 / Oshkosh)</name>
    <dbReference type="NCBI Taxonomy" id="83331"/>
    <lineage>
        <taxon>Bacteria</taxon>
        <taxon>Bacillati</taxon>
        <taxon>Actinomycetota</taxon>
        <taxon>Actinomycetes</taxon>
        <taxon>Mycobacteriales</taxon>
        <taxon>Mycobacteriaceae</taxon>
        <taxon>Mycobacterium</taxon>
        <taxon>Mycobacterium tuberculosis complex</taxon>
    </lineage>
</organism>
<reference key="1">
    <citation type="journal article" date="2002" name="J. Bacteriol.">
        <title>Whole-genome comparison of Mycobacterium tuberculosis clinical and laboratory strains.</title>
        <authorList>
            <person name="Fleischmann R.D."/>
            <person name="Alland D."/>
            <person name="Eisen J.A."/>
            <person name="Carpenter L."/>
            <person name="White O."/>
            <person name="Peterson J.D."/>
            <person name="DeBoy R.T."/>
            <person name="Dodson R.J."/>
            <person name="Gwinn M.L."/>
            <person name="Haft D.H."/>
            <person name="Hickey E.K."/>
            <person name="Kolonay J.F."/>
            <person name="Nelson W.C."/>
            <person name="Umayam L.A."/>
            <person name="Ermolaeva M.D."/>
            <person name="Salzberg S.L."/>
            <person name="Delcher A."/>
            <person name="Utterback T.R."/>
            <person name="Weidman J.F."/>
            <person name="Khouri H.M."/>
            <person name="Gill J."/>
            <person name="Mikula A."/>
            <person name="Bishai W."/>
            <person name="Jacobs W.R. Jr."/>
            <person name="Venter J.C."/>
            <person name="Fraser C.M."/>
        </authorList>
    </citation>
    <scope>NUCLEOTIDE SEQUENCE [LARGE SCALE GENOMIC DNA]</scope>
    <source>
        <strain>CDC 1551 / Oshkosh</strain>
    </source>
</reference>
<accession>P9WJW4</accession>
<accession>L0T9A0</accession>
<accession>P0A696</accession>
<accession>Q10627</accession>
<protein>
    <recommendedName>
        <fullName evidence="1">Methylated-DNA--protein-cysteine methyltransferase</fullName>
        <ecNumber evidence="1">2.1.1.63</ecNumber>
    </recommendedName>
    <alternativeName>
        <fullName evidence="1">6-O-methylguanine-DNA methyltransferase</fullName>
        <shortName evidence="1">MGMT</shortName>
    </alternativeName>
    <alternativeName>
        <fullName evidence="1">O-6-methylguanine-DNA-alkyltransferase</fullName>
    </alternativeName>
</protein>
<feature type="chain" id="PRO_0000427759" description="Methylated-DNA--protein-cysteine methyltransferase">
    <location>
        <begin position="1"/>
        <end position="165"/>
    </location>
</feature>
<feature type="active site" description="Nucleophile; methyl group acceptor" evidence="1">
    <location>
        <position position="126"/>
    </location>
</feature>